<organism>
    <name type="scientific">Dehalococcoides mccartyi (strain CBDB1)</name>
    <dbReference type="NCBI Taxonomy" id="255470"/>
    <lineage>
        <taxon>Bacteria</taxon>
        <taxon>Bacillati</taxon>
        <taxon>Chloroflexota</taxon>
        <taxon>Dehalococcoidia</taxon>
        <taxon>Dehalococcoidales</taxon>
        <taxon>Dehalococcoidaceae</taxon>
        <taxon>Dehalococcoides</taxon>
    </lineage>
</organism>
<keyword id="KW-0456">Lyase</keyword>
<keyword id="KW-0663">Pyridoxal phosphate</keyword>
<keyword id="KW-0704">Schiff base</keyword>
<reference key="1">
    <citation type="journal article" date="2005" name="Nat. Biotechnol.">
        <title>Genome sequence of the chlorinated compound-respiring bacterium Dehalococcoides species strain CBDB1.</title>
        <authorList>
            <person name="Kube M."/>
            <person name="Beck A."/>
            <person name="Zinder S.H."/>
            <person name="Kuhl H."/>
            <person name="Reinhardt R."/>
            <person name="Adrian L."/>
        </authorList>
    </citation>
    <scope>NUCLEOTIDE SEQUENCE [LARGE SCALE GENOMIC DNA]</scope>
    <source>
        <strain>CBDB1</strain>
    </source>
</reference>
<evidence type="ECO:0000255" key="1">
    <source>
        <dbReference type="HAMAP-Rule" id="MF_01824"/>
    </source>
</evidence>
<feature type="chain" id="PRO_1000070368" description="Pyridoxal 5'-phosphate synthase subunit PdxS">
    <location>
        <begin position="1"/>
        <end position="293"/>
    </location>
</feature>
<feature type="active site" description="Schiff-base intermediate with D-ribose 5-phosphate" evidence="1">
    <location>
        <position position="80"/>
    </location>
</feature>
<feature type="binding site" evidence="1">
    <location>
        <position position="23"/>
    </location>
    <ligand>
        <name>D-ribose 5-phosphate</name>
        <dbReference type="ChEBI" id="CHEBI:78346"/>
    </ligand>
</feature>
<feature type="binding site" evidence="1">
    <location>
        <position position="152"/>
    </location>
    <ligand>
        <name>D-ribose 5-phosphate</name>
        <dbReference type="ChEBI" id="CHEBI:78346"/>
    </ligand>
</feature>
<feature type="binding site" evidence="1">
    <location>
        <position position="164"/>
    </location>
    <ligand>
        <name>D-glyceraldehyde 3-phosphate</name>
        <dbReference type="ChEBI" id="CHEBI:59776"/>
    </ligand>
</feature>
<feature type="binding site" evidence="1">
    <location>
        <position position="213"/>
    </location>
    <ligand>
        <name>D-ribose 5-phosphate</name>
        <dbReference type="ChEBI" id="CHEBI:78346"/>
    </ligand>
</feature>
<feature type="binding site" evidence="1">
    <location>
        <begin position="234"/>
        <end position="235"/>
    </location>
    <ligand>
        <name>D-ribose 5-phosphate</name>
        <dbReference type="ChEBI" id="CHEBI:78346"/>
    </ligand>
</feature>
<gene>
    <name evidence="1" type="primary">pdxS</name>
    <name type="ordered locus">cbdbA327</name>
</gene>
<sequence>METGTFKVKSGLAQMLKGGVIMDVTTPEQAKIAEEAGACAVMALERVPSDIRAAGGVARMADPTIIEQIMKVVSIPVMAKCRIGHFVEAQILESMGVDYIDESEVLTPADENFHVWKHDFKVPFVCGCRDLGEALRRIGEGAAMIRTKGEAGTGNIVEAVRHMRSVMGSVRRVQSMSPDELSAYAKEINAPLELVLELHKTGKLPVVNFAAGGVATPADAALMMQLGADGVFVGSGIFKSSNPSAMAKAVVKAVTHYKDAQILAEISKGLGDAMPGLDIKQIDPDKLISQRGW</sequence>
<protein>
    <recommendedName>
        <fullName evidence="1">Pyridoxal 5'-phosphate synthase subunit PdxS</fullName>
        <shortName evidence="1">PLP synthase subunit PdxS</shortName>
        <ecNumber evidence="1">4.3.3.6</ecNumber>
    </recommendedName>
    <alternativeName>
        <fullName evidence="1">Pdx1</fullName>
    </alternativeName>
</protein>
<comment type="function">
    <text evidence="1">Catalyzes the formation of pyridoxal 5'-phosphate from ribose 5-phosphate (RBP), glyceraldehyde 3-phosphate (G3P) and ammonia. The ammonia is provided by the PdxT subunit. Can also use ribulose 5-phosphate and dihydroxyacetone phosphate as substrates, resulting from enzyme-catalyzed isomerization of RBP and G3P, respectively.</text>
</comment>
<comment type="catalytic activity">
    <reaction evidence="1">
        <text>aldehydo-D-ribose 5-phosphate + D-glyceraldehyde 3-phosphate + L-glutamine = pyridoxal 5'-phosphate + L-glutamate + phosphate + 3 H2O + H(+)</text>
        <dbReference type="Rhea" id="RHEA:31507"/>
        <dbReference type="ChEBI" id="CHEBI:15377"/>
        <dbReference type="ChEBI" id="CHEBI:15378"/>
        <dbReference type="ChEBI" id="CHEBI:29985"/>
        <dbReference type="ChEBI" id="CHEBI:43474"/>
        <dbReference type="ChEBI" id="CHEBI:58273"/>
        <dbReference type="ChEBI" id="CHEBI:58359"/>
        <dbReference type="ChEBI" id="CHEBI:59776"/>
        <dbReference type="ChEBI" id="CHEBI:597326"/>
        <dbReference type="EC" id="4.3.3.6"/>
    </reaction>
</comment>
<comment type="pathway">
    <text evidence="1">Cofactor biosynthesis; pyridoxal 5'-phosphate biosynthesis.</text>
</comment>
<comment type="subunit">
    <text evidence="1">In the presence of PdxT, forms a dodecamer of heterodimers.</text>
</comment>
<comment type="similarity">
    <text evidence="1">Belongs to the PdxS/SNZ family.</text>
</comment>
<accession>Q3ZZB8</accession>
<name>PDXS_DEHMC</name>
<proteinExistence type="inferred from homology"/>
<dbReference type="EC" id="4.3.3.6" evidence="1"/>
<dbReference type="EMBL" id="AJ965256">
    <property type="protein sequence ID" value="CAI82548.1"/>
    <property type="molecule type" value="Genomic_DNA"/>
</dbReference>
<dbReference type="RefSeq" id="WP_011308905.1">
    <property type="nucleotide sequence ID" value="NC_007356.1"/>
</dbReference>
<dbReference type="SMR" id="Q3ZZB8"/>
<dbReference type="KEGG" id="deh:cbdbA327"/>
<dbReference type="HOGENOM" id="CLU_055352_1_0_0"/>
<dbReference type="UniPathway" id="UPA00245"/>
<dbReference type="Proteomes" id="UP000000433">
    <property type="component" value="Chromosome"/>
</dbReference>
<dbReference type="GO" id="GO:0036381">
    <property type="term" value="F:pyridoxal 5'-phosphate synthase (glutamine hydrolysing) activity"/>
    <property type="evidence" value="ECO:0007669"/>
    <property type="project" value="UniProtKB-UniRule"/>
</dbReference>
<dbReference type="GO" id="GO:0006520">
    <property type="term" value="P:amino acid metabolic process"/>
    <property type="evidence" value="ECO:0007669"/>
    <property type="project" value="TreeGrafter"/>
</dbReference>
<dbReference type="GO" id="GO:0042823">
    <property type="term" value="P:pyridoxal phosphate biosynthetic process"/>
    <property type="evidence" value="ECO:0007669"/>
    <property type="project" value="UniProtKB-UniRule"/>
</dbReference>
<dbReference type="GO" id="GO:0008615">
    <property type="term" value="P:pyridoxine biosynthetic process"/>
    <property type="evidence" value="ECO:0007669"/>
    <property type="project" value="TreeGrafter"/>
</dbReference>
<dbReference type="CDD" id="cd04727">
    <property type="entry name" value="pdxS"/>
    <property type="match status" value="1"/>
</dbReference>
<dbReference type="FunFam" id="3.20.20.70:FF:000001">
    <property type="entry name" value="Pyridoxine biosynthesis protein PDX1"/>
    <property type="match status" value="1"/>
</dbReference>
<dbReference type="Gene3D" id="3.20.20.70">
    <property type="entry name" value="Aldolase class I"/>
    <property type="match status" value="1"/>
</dbReference>
<dbReference type="HAMAP" id="MF_01824">
    <property type="entry name" value="PdxS"/>
    <property type="match status" value="1"/>
</dbReference>
<dbReference type="InterPro" id="IPR013785">
    <property type="entry name" value="Aldolase_TIM"/>
</dbReference>
<dbReference type="InterPro" id="IPR001852">
    <property type="entry name" value="PdxS/SNZ"/>
</dbReference>
<dbReference type="InterPro" id="IPR033755">
    <property type="entry name" value="PdxS/SNZ_N"/>
</dbReference>
<dbReference type="InterPro" id="IPR011060">
    <property type="entry name" value="RibuloseP-bd_barrel"/>
</dbReference>
<dbReference type="NCBIfam" id="NF003215">
    <property type="entry name" value="PRK04180.1"/>
    <property type="match status" value="1"/>
</dbReference>
<dbReference type="NCBIfam" id="TIGR00343">
    <property type="entry name" value="pyridoxal 5'-phosphate synthase lyase subunit PdxS"/>
    <property type="match status" value="1"/>
</dbReference>
<dbReference type="PANTHER" id="PTHR31829">
    <property type="entry name" value="PYRIDOXAL 5'-PHOSPHATE SYNTHASE SUBUNIT SNZ1-RELATED"/>
    <property type="match status" value="1"/>
</dbReference>
<dbReference type="PANTHER" id="PTHR31829:SF0">
    <property type="entry name" value="PYRIDOXAL 5'-PHOSPHATE SYNTHASE SUBUNIT SNZ1-RELATED"/>
    <property type="match status" value="1"/>
</dbReference>
<dbReference type="Pfam" id="PF01680">
    <property type="entry name" value="SOR_SNZ"/>
    <property type="match status" value="1"/>
</dbReference>
<dbReference type="PIRSF" id="PIRSF029271">
    <property type="entry name" value="Pdx1"/>
    <property type="match status" value="1"/>
</dbReference>
<dbReference type="SUPFAM" id="SSF51366">
    <property type="entry name" value="Ribulose-phoshate binding barrel"/>
    <property type="match status" value="1"/>
</dbReference>
<dbReference type="PROSITE" id="PS01235">
    <property type="entry name" value="PDXS_SNZ_1"/>
    <property type="match status" value="1"/>
</dbReference>
<dbReference type="PROSITE" id="PS51129">
    <property type="entry name" value="PDXS_SNZ_2"/>
    <property type="match status" value="1"/>
</dbReference>